<comment type="similarity">
    <text evidence="1">Belongs to the bacterial ribosomal protein bL33 family.</text>
</comment>
<accession>Q3BMM6</accession>
<name>RL33_XANE5</name>
<organism>
    <name type="scientific">Xanthomonas euvesicatoria pv. vesicatoria (strain 85-10)</name>
    <name type="common">Xanthomonas campestris pv. vesicatoria</name>
    <dbReference type="NCBI Taxonomy" id="316273"/>
    <lineage>
        <taxon>Bacteria</taxon>
        <taxon>Pseudomonadati</taxon>
        <taxon>Pseudomonadota</taxon>
        <taxon>Gammaproteobacteria</taxon>
        <taxon>Lysobacterales</taxon>
        <taxon>Lysobacteraceae</taxon>
        <taxon>Xanthomonas</taxon>
    </lineage>
</organism>
<sequence length="55" mass="6406">MAKGKRDKIRMISSAATGHFYTTDKNKKNTPGKMEMMKYDPVVRKHVMYKEGKIK</sequence>
<proteinExistence type="inferred from homology"/>
<feature type="chain" id="PRO_1000004214" description="Large ribosomal subunit protein bL33">
    <location>
        <begin position="1"/>
        <end position="55"/>
    </location>
</feature>
<reference key="1">
    <citation type="journal article" date="2005" name="J. Bacteriol.">
        <title>Insights into genome plasticity and pathogenicity of the plant pathogenic Bacterium Xanthomonas campestris pv. vesicatoria revealed by the complete genome sequence.</title>
        <authorList>
            <person name="Thieme F."/>
            <person name="Koebnik R."/>
            <person name="Bekel T."/>
            <person name="Berger C."/>
            <person name="Boch J."/>
            <person name="Buettner D."/>
            <person name="Caldana C."/>
            <person name="Gaigalat L."/>
            <person name="Goesmann A."/>
            <person name="Kay S."/>
            <person name="Kirchner O."/>
            <person name="Lanz C."/>
            <person name="Linke B."/>
            <person name="McHardy A.C."/>
            <person name="Meyer F."/>
            <person name="Mittenhuber G."/>
            <person name="Nies D.H."/>
            <person name="Niesbach-Kloesgen U."/>
            <person name="Patschkowski T."/>
            <person name="Rueckert C."/>
            <person name="Rupp O."/>
            <person name="Schneiker S."/>
            <person name="Schuster S.C."/>
            <person name="Vorhoelter F.J."/>
            <person name="Weber E."/>
            <person name="Puehler A."/>
            <person name="Bonas U."/>
            <person name="Bartels D."/>
            <person name="Kaiser O."/>
        </authorList>
    </citation>
    <scope>NUCLEOTIDE SEQUENCE [LARGE SCALE GENOMIC DNA]</scope>
    <source>
        <strain>85-10</strain>
    </source>
</reference>
<evidence type="ECO:0000255" key="1">
    <source>
        <dbReference type="HAMAP-Rule" id="MF_00294"/>
    </source>
</evidence>
<evidence type="ECO:0000305" key="2"/>
<keyword id="KW-0687">Ribonucleoprotein</keyword>
<keyword id="KW-0689">Ribosomal protein</keyword>
<dbReference type="EMBL" id="AM039952">
    <property type="protein sequence ID" value="CAJ25987.1"/>
    <property type="molecule type" value="Genomic_DNA"/>
</dbReference>
<dbReference type="RefSeq" id="WP_002809462.1">
    <property type="nucleotide sequence ID" value="NZ_CP017190.1"/>
</dbReference>
<dbReference type="SMR" id="Q3BMM6"/>
<dbReference type="STRING" id="456327.BJD11_24115"/>
<dbReference type="GeneID" id="97512303"/>
<dbReference type="KEGG" id="xcv:XCV4256"/>
<dbReference type="eggNOG" id="COG0267">
    <property type="taxonomic scope" value="Bacteria"/>
</dbReference>
<dbReference type="HOGENOM" id="CLU_190949_1_1_6"/>
<dbReference type="Proteomes" id="UP000007069">
    <property type="component" value="Chromosome"/>
</dbReference>
<dbReference type="GO" id="GO:0022625">
    <property type="term" value="C:cytosolic large ribosomal subunit"/>
    <property type="evidence" value="ECO:0007669"/>
    <property type="project" value="TreeGrafter"/>
</dbReference>
<dbReference type="GO" id="GO:0003735">
    <property type="term" value="F:structural constituent of ribosome"/>
    <property type="evidence" value="ECO:0007669"/>
    <property type="project" value="InterPro"/>
</dbReference>
<dbReference type="GO" id="GO:0006412">
    <property type="term" value="P:translation"/>
    <property type="evidence" value="ECO:0007669"/>
    <property type="project" value="UniProtKB-UniRule"/>
</dbReference>
<dbReference type="FunFam" id="2.20.28.120:FF:000001">
    <property type="entry name" value="50S ribosomal protein L33"/>
    <property type="match status" value="1"/>
</dbReference>
<dbReference type="Gene3D" id="2.20.28.120">
    <property type="entry name" value="Ribosomal protein L33"/>
    <property type="match status" value="1"/>
</dbReference>
<dbReference type="HAMAP" id="MF_00294">
    <property type="entry name" value="Ribosomal_bL33"/>
    <property type="match status" value="1"/>
</dbReference>
<dbReference type="InterPro" id="IPR001705">
    <property type="entry name" value="Ribosomal_bL33"/>
</dbReference>
<dbReference type="InterPro" id="IPR018264">
    <property type="entry name" value="Ribosomal_bL33_CS"/>
</dbReference>
<dbReference type="InterPro" id="IPR038584">
    <property type="entry name" value="Ribosomal_bL33_sf"/>
</dbReference>
<dbReference type="InterPro" id="IPR011332">
    <property type="entry name" value="Ribosomal_zn-bd"/>
</dbReference>
<dbReference type="NCBIfam" id="NF001860">
    <property type="entry name" value="PRK00595.1"/>
    <property type="match status" value="1"/>
</dbReference>
<dbReference type="NCBIfam" id="TIGR01023">
    <property type="entry name" value="rpmG_bact"/>
    <property type="match status" value="1"/>
</dbReference>
<dbReference type="PANTHER" id="PTHR15238">
    <property type="entry name" value="54S RIBOSOMAL PROTEIN L39, MITOCHONDRIAL"/>
    <property type="match status" value="1"/>
</dbReference>
<dbReference type="PANTHER" id="PTHR15238:SF1">
    <property type="entry name" value="LARGE RIBOSOMAL SUBUNIT PROTEIN BL33M"/>
    <property type="match status" value="1"/>
</dbReference>
<dbReference type="Pfam" id="PF00471">
    <property type="entry name" value="Ribosomal_L33"/>
    <property type="match status" value="1"/>
</dbReference>
<dbReference type="SUPFAM" id="SSF57829">
    <property type="entry name" value="Zn-binding ribosomal proteins"/>
    <property type="match status" value="1"/>
</dbReference>
<dbReference type="PROSITE" id="PS00582">
    <property type="entry name" value="RIBOSOMAL_L33"/>
    <property type="match status" value="1"/>
</dbReference>
<gene>
    <name evidence="1" type="primary">rpmG</name>
    <name type="ordered locus">XCV4256</name>
</gene>
<protein>
    <recommendedName>
        <fullName evidence="1">Large ribosomal subunit protein bL33</fullName>
    </recommendedName>
    <alternativeName>
        <fullName evidence="2">50S ribosomal protein L33</fullName>
    </alternativeName>
</protein>